<reference key="1">
    <citation type="journal article" date="2010" name="J. Bacteriol.">
        <title>Whole genome sequences of two Xylella fastidiosa strains (M12 and M23) causing almond leaf scorch disease in California.</title>
        <authorList>
            <person name="Chen J."/>
            <person name="Xie G."/>
            <person name="Han S."/>
            <person name="Chertkov O."/>
            <person name="Sims D."/>
            <person name="Civerolo E.L."/>
        </authorList>
    </citation>
    <scope>NUCLEOTIDE SEQUENCE [LARGE SCALE GENOMIC DNA]</scope>
    <source>
        <strain>M12</strain>
    </source>
</reference>
<organism>
    <name type="scientific">Xylella fastidiosa (strain M12)</name>
    <dbReference type="NCBI Taxonomy" id="405440"/>
    <lineage>
        <taxon>Bacteria</taxon>
        <taxon>Pseudomonadati</taxon>
        <taxon>Pseudomonadota</taxon>
        <taxon>Gammaproteobacteria</taxon>
        <taxon>Lysobacterales</taxon>
        <taxon>Lysobacteraceae</taxon>
        <taxon>Xylella</taxon>
    </lineage>
</organism>
<dbReference type="EC" id="1.3.1.98" evidence="1"/>
<dbReference type="EMBL" id="CP000941">
    <property type="protein sequence ID" value="ACA13000.1"/>
    <property type="molecule type" value="Genomic_DNA"/>
</dbReference>
<dbReference type="RefSeq" id="WP_004084645.1">
    <property type="nucleotide sequence ID" value="NC_010513.1"/>
</dbReference>
<dbReference type="SMR" id="B0U5I2"/>
<dbReference type="GeneID" id="93905815"/>
<dbReference type="KEGG" id="xfm:Xfasm12_2144"/>
<dbReference type="HOGENOM" id="CLU_035304_0_0_6"/>
<dbReference type="UniPathway" id="UPA00219"/>
<dbReference type="GO" id="GO:0005829">
    <property type="term" value="C:cytosol"/>
    <property type="evidence" value="ECO:0007669"/>
    <property type="project" value="TreeGrafter"/>
</dbReference>
<dbReference type="GO" id="GO:0071949">
    <property type="term" value="F:FAD binding"/>
    <property type="evidence" value="ECO:0007669"/>
    <property type="project" value="InterPro"/>
</dbReference>
<dbReference type="GO" id="GO:0008762">
    <property type="term" value="F:UDP-N-acetylmuramate dehydrogenase activity"/>
    <property type="evidence" value="ECO:0007669"/>
    <property type="project" value="UniProtKB-UniRule"/>
</dbReference>
<dbReference type="GO" id="GO:0051301">
    <property type="term" value="P:cell division"/>
    <property type="evidence" value="ECO:0007669"/>
    <property type="project" value="UniProtKB-KW"/>
</dbReference>
<dbReference type="GO" id="GO:0071555">
    <property type="term" value="P:cell wall organization"/>
    <property type="evidence" value="ECO:0007669"/>
    <property type="project" value="UniProtKB-KW"/>
</dbReference>
<dbReference type="GO" id="GO:0009252">
    <property type="term" value="P:peptidoglycan biosynthetic process"/>
    <property type="evidence" value="ECO:0007669"/>
    <property type="project" value="UniProtKB-UniRule"/>
</dbReference>
<dbReference type="GO" id="GO:0008360">
    <property type="term" value="P:regulation of cell shape"/>
    <property type="evidence" value="ECO:0007669"/>
    <property type="project" value="UniProtKB-KW"/>
</dbReference>
<dbReference type="Gene3D" id="3.30.465.10">
    <property type="match status" value="1"/>
</dbReference>
<dbReference type="Gene3D" id="3.90.78.10">
    <property type="entry name" value="UDP-N-acetylenolpyruvoylglucosamine reductase, C-terminal domain"/>
    <property type="match status" value="1"/>
</dbReference>
<dbReference type="Gene3D" id="3.30.43.10">
    <property type="entry name" value="Uridine Diphospho-n-acetylenolpyruvylglucosamine Reductase, domain 2"/>
    <property type="match status" value="1"/>
</dbReference>
<dbReference type="HAMAP" id="MF_00037">
    <property type="entry name" value="MurB"/>
    <property type="match status" value="1"/>
</dbReference>
<dbReference type="InterPro" id="IPR016166">
    <property type="entry name" value="FAD-bd_PCMH"/>
</dbReference>
<dbReference type="InterPro" id="IPR036318">
    <property type="entry name" value="FAD-bd_PCMH-like_sf"/>
</dbReference>
<dbReference type="InterPro" id="IPR016167">
    <property type="entry name" value="FAD-bd_PCMH_sub1"/>
</dbReference>
<dbReference type="InterPro" id="IPR016169">
    <property type="entry name" value="FAD-bd_PCMH_sub2"/>
</dbReference>
<dbReference type="InterPro" id="IPR003170">
    <property type="entry name" value="MurB"/>
</dbReference>
<dbReference type="InterPro" id="IPR011601">
    <property type="entry name" value="MurB_C"/>
</dbReference>
<dbReference type="InterPro" id="IPR036635">
    <property type="entry name" value="MurB_C_sf"/>
</dbReference>
<dbReference type="InterPro" id="IPR006094">
    <property type="entry name" value="Oxid_FAD_bind_N"/>
</dbReference>
<dbReference type="NCBIfam" id="TIGR00179">
    <property type="entry name" value="murB"/>
    <property type="match status" value="1"/>
</dbReference>
<dbReference type="NCBIfam" id="NF000755">
    <property type="entry name" value="PRK00046.1"/>
    <property type="match status" value="1"/>
</dbReference>
<dbReference type="NCBIfam" id="NF010478">
    <property type="entry name" value="PRK13903.1"/>
    <property type="match status" value="1"/>
</dbReference>
<dbReference type="PANTHER" id="PTHR21071">
    <property type="entry name" value="UDP-N-ACETYLENOLPYRUVOYLGLUCOSAMINE REDUCTASE"/>
    <property type="match status" value="1"/>
</dbReference>
<dbReference type="PANTHER" id="PTHR21071:SF4">
    <property type="entry name" value="UDP-N-ACETYLENOLPYRUVOYLGLUCOSAMINE REDUCTASE"/>
    <property type="match status" value="1"/>
</dbReference>
<dbReference type="Pfam" id="PF01565">
    <property type="entry name" value="FAD_binding_4"/>
    <property type="match status" value="1"/>
</dbReference>
<dbReference type="Pfam" id="PF02873">
    <property type="entry name" value="MurB_C"/>
    <property type="match status" value="1"/>
</dbReference>
<dbReference type="SUPFAM" id="SSF56176">
    <property type="entry name" value="FAD-binding/transporter-associated domain-like"/>
    <property type="match status" value="1"/>
</dbReference>
<dbReference type="SUPFAM" id="SSF56194">
    <property type="entry name" value="Uridine diphospho-N-Acetylenolpyruvylglucosamine reductase, MurB, C-terminal domain"/>
    <property type="match status" value="1"/>
</dbReference>
<dbReference type="PROSITE" id="PS51387">
    <property type="entry name" value="FAD_PCMH"/>
    <property type="match status" value="1"/>
</dbReference>
<evidence type="ECO:0000255" key="1">
    <source>
        <dbReference type="HAMAP-Rule" id="MF_00037"/>
    </source>
</evidence>
<keyword id="KW-0131">Cell cycle</keyword>
<keyword id="KW-0132">Cell division</keyword>
<keyword id="KW-0133">Cell shape</keyword>
<keyword id="KW-0961">Cell wall biogenesis/degradation</keyword>
<keyword id="KW-0963">Cytoplasm</keyword>
<keyword id="KW-0274">FAD</keyword>
<keyword id="KW-0285">Flavoprotein</keyword>
<keyword id="KW-0521">NADP</keyword>
<keyword id="KW-0560">Oxidoreductase</keyword>
<keyword id="KW-0573">Peptidoglycan synthesis</keyword>
<comment type="function">
    <text evidence="1">Cell wall formation.</text>
</comment>
<comment type="catalytic activity">
    <reaction evidence="1">
        <text>UDP-N-acetyl-alpha-D-muramate + NADP(+) = UDP-N-acetyl-3-O-(1-carboxyvinyl)-alpha-D-glucosamine + NADPH + H(+)</text>
        <dbReference type="Rhea" id="RHEA:12248"/>
        <dbReference type="ChEBI" id="CHEBI:15378"/>
        <dbReference type="ChEBI" id="CHEBI:57783"/>
        <dbReference type="ChEBI" id="CHEBI:58349"/>
        <dbReference type="ChEBI" id="CHEBI:68483"/>
        <dbReference type="ChEBI" id="CHEBI:70757"/>
        <dbReference type="EC" id="1.3.1.98"/>
    </reaction>
</comment>
<comment type="cofactor">
    <cofactor evidence="1">
        <name>FAD</name>
        <dbReference type="ChEBI" id="CHEBI:57692"/>
    </cofactor>
</comment>
<comment type="pathway">
    <text evidence="1">Cell wall biogenesis; peptidoglycan biosynthesis.</text>
</comment>
<comment type="subcellular location">
    <subcellularLocation>
        <location evidence="1">Cytoplasm</location>
    </subcellularLocation>
</comment>
<comment type="similarity">
    <text evidence="1">Belongs to the MurB family.</text>
</comment>
<name>MURB_XYLFM</name>
<sequence>MSRQINTPDWILHANAPLRELNTFHIQAQARWLLEIIHPTALPQALTHPHIVGLPILVLGSGSNVLFAADPEECVLRFVNREVTILEHRIDHTLVRAGAGMAWHDLVLWSLQQGLSGLENLALIPGTVGACSIQNIGAYGVQVEEFVHIVEAYDQTEGKFVRLTASECEFAYRNSRFKREPNRYLITAVEFRLPLLHELNLNYAGISEELEALQITLPEPCDVAQAVINLRRRKLPDPEVLSNAGSFFKNPHLPREQAEQLRQHHPTLPIYPGETPESNKLSAAWLIEQCGWKGIREGDAGVAPQHSLVLVNYGEATGAELLALARRIAASVQERFGVAIEPETRLIGAQW</sequence>
<accession>B0U5I2</accession>
<gene>
    <name evidence="1" type="primary">murB</name>
    <name type="ordered locus">Xfasm12_2144</name>
</gene>
<feature type="chain" id="PRO_1000117152" description="UDP-N-acetylenolpyruvoylglucosamine reductase">
    <location>
        <begin position="1"/>
        <end position="351"/>
    </location>
</feature>
<feature type="domain" description="FAD-binding PCMH-type" evidence="1">
    <location>
        <begin position="25"/>
        <end position="196"/>
    </location>
</feature>
<feature type="active site" evidence="1">
    <location>
        <position position="173"/>
    </location>
</feature>
<feature type="active site" description="Proton donor" evidence="1">
    <location>
        <position position="246"/>
    </location>
</feature>
<feature type="active site" evidence="1">
    <location>
        <position position="343"/>
    </location>
</feature>
<protein>
    <recommendedName>
        <fullName evidence="1">UDP-N-acetylenolpyruvoylglucosamine reductase</fullName>
        <ecNumber evidence="1">1.3.1.98</ecNumber>
    </recommendedName>
    <alternativeName>
        <fullName evidence="1">UDP-N-acetylmuramate dehydrogenase</fullName>
    </alternativeName>
</protein>
<proteinExistence type="inferred from homology"/>